<proteinExistence type="inferred from homology"/>
<evidence type="ECO:0000255" key="1">
    <source>
        <dbReference type="HAMAP-Rule" id="MF_00658"/>
    </source>
</evidence>
<sequence length="159" mass="17962">MNIKIIGVGKLKEKYLKQGIAEYAKRLGTFCKFQIVEVPDEKAPEKLSPAEMEGVKEKEGERILAKIKDKEYVYALAIEGKERSSEEFAKELEDLGTYGTSDITFVIGGSLGLSPEVLKRANTKISFGRFTLPHQLMRMVLAEQIYRGFMINAGRPYHK</sequence>
<keyword id="KW-0963">Cytoplasm</keyword>
<keyword id="KW-0489">Methyltransferase</keyword>
<keyword id="KW-1185">Reference proteome</keyword>
<keyword id="KW-0698">rRNA processing</keyword>
<keyword id="KW-0949">S-adenosyl-L-methionine</keyword>
<keyword id="KW-0808">Transferase</keyword>
<dbReference type="EC" id="2.1.1.177" evidence="1"/>
<dbReference type="EMBL" id="CP000233">
    <property type="protein sequence ID" value="ABD98864.1"/>
    <property type="molecule type" value="Genomic_DNA"/>
</dbReference>
<dbReference type="RefSeq" id="WP_003702726.1">
    <property type="nucleotide sequence ID" value="NC_007929.1"/>
</dbReference>
<dbReference type="RefSeq" id="YP_534947.1">
    <property type="nucleotide sequence ID" value="NC_007929.1"/>
</dbReference>
<dbReference type="SMR" id="Q1WVS1"/>
<dbReference type="STRING" id="362948.LSL_0043"/>
<dbReference type="KEGG" id="lsl:LSL_0043"/>
<dbReference type="PATRIC" id="fig|362948.14.peg.117"/>
<dbReference type="HOGENOM" id="CLU_100552_0_0_9"/>
<dbReference type="OrthoDB" id="9806643at2"/>
<dbReference type="Proteomes" id="UP000006559">
    <property type="component" value="Chromosome"/>
</dbReference>
<dbReference type="GO" id="GO:0005737">
    <property type="term" value="C:cytoplasm"/>
    <property type="evidence" value="ECO:0007669"/>
    <property type="project" value="UniProtKB-SubCell"/>
</dbReference>
<dbReference type="GO" id="GO:0070038">
    <property type="term" value="F:rRNA (pseudouridine-N3-)-methyltransferase activity"/>
    <property type="evidence" value="ECO:0007669"/>
    <property type="project" value="UniProtKB-UniRule"/>
</dbReference>
<dbReference type="CDD" id="cd18081">
    <property type="entry name" value="RlmH-like"/>
    <property type="match status" value="1"/>
</dbReference>
<dbReference type="Gene3D" id="3.40.1280.10">
    <property type="match status" value="1"/>
</dbReference>
<dbReference type="HAMAP" id="MF_00658">
    <property type="entry name" value="23SrRNA_methyltr_H"/>
    <property type="match status" value="1"/>
</dbReference>
<dbReference type="InterPro" id="IPR029028">
    <property type="entry name" value="Alpha/beta_knot_MTases"/>
</dbReference>
<dbReference type="InterPro" id="IPR003742">
    <property type="entry name" value="RlmH-like"/>
</dbReference>
<dbReference type="InterPro" id="IPR029026">
    <property type="entry name" value="tRNA_m1G_MTases_N"/>
</dbReference>
<dbReference type="NCBIfam" id="NF000985">
    <property type="entry name" value="PRK00103.1-3"/>
    <property type="match status" value="1"/>
</dbReference>
<dbReference type="NCBIfam" id="TIGR00246">
    <property type="entry name" value="tRNA_RlmH_YbeA"/>
    <property type="match status" value="1"/>
</dbReference>
<dbReference type="PANTHER" id="PTHR33603">
    <property type="entry name" value="METHYLTRANSFERASE"/>
    <property type="match status" value="1"/>
</dbReference>
<dbReference type="PANTHER" id="PTHR33603:SF1">
    <property type="entry name" value="RIBOSOMAL RNA LARGE SUBUNIT METHYLTRANSFERASE H"/>
    <property type="match status" value="1"/>
</dbReference>
<dbReference type="Pfam" id="PF02590">
    <property type="entry name" value="SPOUT_MTase"/>
    <property type="match status" value="1"/>
</dbReference>
<dbReference type="PIRSF" id="PIRSF004505">
    <property type="entry name" value="MT_bac"/>
    <property type="match status" value="1"/>
</dbReference>
<dbReference type="SUPFAM" id="SSF75217">
    <property type="entry name" value="alpha/beta knot"/>
    <property type="match status" value="1"/>
</dbReference>
<gene>
    <name evidence="1" type="primary">rlmH</name>
    <name type="ordered locus">LSL_0043</name>
</gene>
<feature type="chain" id="PRO_0000260565" description="Ribosomal RNA large subunit methyltransferase H">
    <location>
        <begin position="1"/>
        <end position="159"/>
    </location>
</feature>
<feature type="binding site" evidence="1">
    <location>
        <position position="76"/>
    </location>
    <ligand>
        <name>S-adenosyl-L-methionine</name>
        <dbReference type="ChEBI" id="CHEBI:59789"/>
    </ligand>
</feature>
<feature type="binding site" evidence="1">
    <location>
        <position position="108"/>
    </location>
    <ligand>
        <name>S-adenosyl-L-methionine</name>
        <dbReference type="ChEBI" id="CHEBI:59789"/>
    </ligand>
</feature>
<comment type="function">
    <text evidence="1">Specifically methylates the pseudouridine at position 1915 (m3Psi1915) in 23S rRNA.</text>
</comment>
<comment type="catalytic activity">
    <reaction evidence="1">
        <text>pseudouridine(1915) in 23S rRNA + S-adenosyl-L-methionine = N(3)-methylpseudouridine(1915) in 23S rRNA + S-adenosyl-L-homocysteine + H(+)</text>
        <dbReference type="Rhea" id="RHEA:42752"/>
        <dbReference type="Rhea" id="RHEA-COMP:10221"/>
        <dbReference type="Rhea" id="RHEA-COMP:10222"/>
        <dbReference type="ChEBI" id="CHEBI:15378"/>
        <dbReference type="ChEBI" id="CHEBI:57856"/>
        <dbReference type="ChEBI" id="CHEBI:59789"/>
        <dbReference type="ChEBI" id="CHEBI:65314"/>
        <dbReference type="ChEBI" id="CHEBI:74486"/>
        <dbReference type="EC" id="2.1.1.177"/>
    </reaction>
</comment>
<comment type="subunit">
    <text evidence="1">Homodimer.</text>
</comment>
<comment type="subcellular location">
    <subcellularLocation>
        <location evidence="1">Cytoplasm</location>
    </subcellularLocation>
</comment>
<comment type="similarity">
    <text evidence="1">Belongs to the RNA methyltransferase RlmH family.</text>
</comment>
<organism>
    <name type="scientific">Ligilactobacillus salivarius (strain UCC118)</name>
    <name type="common">Lactobacillus salivarius</name>
    <dbReference type="NCBI Taxonomy" id="362948"/>
    <lineage>
        <taxon>Bacteria</taxon>
        <taxon>Bacillati</taxon>
        <taxon>Bacillota</taxon>
        <taxon>Bacilli</taxon>
        <taxon>Lactobacillales</taxon>
        <taxon>Lactobacillaceae</taxon>
        <taxon>Ligilactobacillus</taxon>
    </lineage>
</organism>
<name>RLMH_LIGS1</name>
<protein>
    <recommendedName>
        <fullName evidence="1">Ribosomal RNA large subunit methyltransferase H</fullName>
        <ecNumber evidence="1">2.1.1.177</ecNumber>
    </recommendedName>
    <alternativeName>
        <fullName evidence="1">23S rRNA (pseudouridine1915-N3)-methyltransferase</fullName>
    </alternativeName>
    <alternativeName>
        <fullName evidence="1">23S rRNA m3Psi1915 methyltransferase</fullName>
    </alternativeName>
    <alternativeName>
        <fullName evidence="1">rRNA (pseudouridine-N3-)-methyltransferase RlmH</fullName>
    </alternativeName>
</protein>
<reference key="1">
    <citation type="journal article" date="2006" name="Proc. Natl. Acad. Sci. U.S.A.">
        <title>Multireplicon genome architecture of Lactobacillus salivarius.</title>
        <authorList>
            <person name="Claesson M.J."/>
            <person name="Li Y."/>
            <person name="Leahy S."/>
            <person name="Canchaya C."/>
            <person name="van Pijkeren J.P."/>
            <person name="Cerdeno-Tarraga A.M."/>
            <person name="Parkhill J."/>
            <person name="Flynn S."/>
            <person name="O'Sullivan G.C."/>
            <person name="Collins J.K."/>
            <person name="Higgins D."/>
            <person name="Shanahan F."/>
            <person name="Fitzgerald G.F."/>
            <person name="van Sinderen D."/>
            <person name="O'Toole P.W."/>
        </authorList>
    </citation>
    <scope>NUCLEOTIDE SEQUENCE [LARGE SCALE GENOMIC DNA]</scope>
    <source>
        <strain>UCC118</strain>
    </source>
</reference>
<accession>Q1WVS1</accession>